<proteinExistence type="inferred from homology"/>
<comment type="function">
    <text evidence="1">Binds to 23S rRNA. Forms part of two intersubunit bridges in the 70S ribosome.</text>
</comment>
<comment type="subunit">
    <text evidence="1">Part of the 50S ribosomal subunit. Forms a cluster with proteins L3 and L19. In the 70S ribosome, L14 and L19 interact and together make contacts with the 16S rRNA in bridges B5 and B8.</text>
</comment>
<comment type="similarity">
    <text evidence="1">Belongs to the universal ribosomal protein uL14 family.</text>
</comment>
<name>RL14_CYAP4</name>
<sequence>MIQQESYLNVADNSGAKKLLCIRVLGGGNRRYGSVGDVIIATVKDATPNMPVKKSDVVRAVIVRTRKAIRRESGMSIRFDDNAAVLINQDGNPKGTRVFGPVARELRDKNFTKIVSLAPEVL</sequence>
<protein>
    <recommendedName>
        <fullName evidence="1">Large ribosomal subunit protein uL14</fullName>
    </recommendedName>
    <alternativeName>
        <fullName evidence="2">50S ribosomal protein L14</fullName>
    </alternativeName>
</protein>
<gene>
    <name evidence="1" type="primary">rplN</name>
    <name evidence="1" type="synonym">rpl14</name>
    <name type="ordered locus">Cyan7425_1302</name>
</gene>
<organism>
    <name type="scientific">Cyanothece sp. (strain PCC 7425 / ATCC 29141)</name>
    <dbReference type="NCBI Taxonomy" id="395961"/>
    <lineage>
        <taxon>Bacteria</taxon>
        <taxon>Bacillati</taxon>
        <taxon>Cyanobacteriota</taxon>
        <taxon>Cyanophyceae</taxon>
        <taxon>Gomontiellales</taxon>
        <taxon>Cyanothecaceae</taxon>
        <taxon>Cyanothece</taxon>
    </lineage>
</organism>
<accession>B8HMR4</accession>
<feature type="chain" id="PRO_1000166915" description="Large ribosomal subunit protein uL14">
    <location>
        <begin position="1"/>
        <end position="122"/>
    </location>
</feature>
<keyword id="KW-0687">Ribonucleoprotein</keyword>
<keyword id="KW-0689">Ribosomal protein</keyword>
<keyword id="KW-0694">RNA-binding</keyword>
<keyword id="KW-0699">rRNA-binding</keyword>
<dbReference type="EMBL" id="CP001344">
    <property type="protein sequence ID" value="ACL43679.1"/>
    <property type="molecule type" value="Genomic_DNA"/>
</dbReference>
<dbReference type="SMR" id="B8HMR4"/>
<dbReference type="STRING" id="395961.Cyan7425_1302"/>
<dbReference type="KEGG" id="cyn:Cyan7425_1302"/>
<dbReference type="eggNOG" id="COG0093">
    <property type="taxonomic scope" value="Bacteria"/>
</dbReference>
<dbReference type="HOGENOM" id="CLU_095071_2_1_3"/>
<dbReference type="OrthoDB" id="9806379at2"/>
<dbReference type="GO" id="GO:0022625">
    <property type="term" value="C:cytosolic large ribosomal subunit"/>
    <property type="evidence" value="ECO:0007669"/>
    <property type="project" value="TreeGrafter"/>
</dbReference>
<dbReference type="GO" id="GO:0070180">
    <property type="term" value="F:large ribosomal subunit rRNA binding"/>
    <property type="evidence" value="ECO:0007669"/>
    <property type="project" value="TreeGrafter"/>
</dbReference>
<dbReference type="GO" id="GO:0003735">
    <property type="term" value="F:structural constituent of ribosome"/>
    <property type="evidence" value="ECO:0007669"/>
    <property type="project" value="InterPro"/>
</dbReference>
<dbReference type="GO" id="GO:0006412">
    <property type="term" value="P:translation"/>
    <property type="evidence" value="ECO:0007669"/>
    <property type="project" value="UniProtKB-UniRule"/>
</dbReference>
<dbReference type="CDD" id="cd00337">
    <property type="entry name" value="Ribosomal_uL14"/>
    <property type="match status" value="1"/>
</dbReference>
<dbReference type="FunFam" id="2.40.150.20:FF:000001">
    <property type="entry name" value="50S ribosomal protein L14"/>
    <property type="match status" value="1"/>
</dbReference>
<dbReference type="Gene3D" id="2.40.150.20">
    <property type="entry name" value="Ribosomal protein L14"/>
    <property type="match status" value="1"/>
</dbReference>
<dbReference type="HAMAP" id="MF_01367">
    <property type="entry name" value="Ribosomal_uL14"/>
    <property type="match status" value="1"/>
</dbReference>
<dbReference type="InterPro" id="IPR000218">
    <property type="entry name" value="Ribosomal_uL14"/>
</dbReference>
<dbReference type="InterPro" id="IPR005745">
    <property type="entry name" value="Ribosomal_uL14_bac-type"/>
</dbReference>
<dbReference type="InterPro" id="IPR019972">
    <property type="entry name" value="Ribosomal_uL14_CS"/>
</dbReference>
<dbReference type="InterPro" id="IPR036853">
    <property type="entry name" value="Ribosomal_uL14_sf"/>
</dbReference>
<dbReference type="NCBIfam" id="TIGR01067">
    <property type="entry name" value="rplN_bact"/>
    <property type="match status" value="1"/>
</dbReference>
<dbReference type="PANTHER" id="PTHR11761">
    <property type="entry name" value="50S/60S RIBOSOMAL PROTEIN L14/L23"/>
    <property type="match status" value="1"/>
</dbReference>
<dbReference type="PANTHER" id="PTHR11761:SF3">
    <property type="entry name" value="LARGE RIBOSOMAL SUBUNIT PROTEIN UL14M"/>
    <property type="match status" value="1"/>
</dbReference>
<dbReference type="Pfam" id="PF00238">
    <property type="entry name" value="Ribosomal_L14"/>
    <property type="match status" value="1"/>
</dbReference>
<dbReference type="SMART" id="SM01374">
    <property type="entry name" value="Ribosomal_L14"/>
    <property type="match status" value="1"/>
</dbReference>
<dbReference type="SUPFAM" id="SSF50193">
    <property type="entry name" value="Ribosomal protein L14"/>
    <property type="match status" value="1"/>
</dbReference>
<dbReference type="PROSITE" id="PS00049">
    <property type="entry name" value="RIBOSOMAL_L14"/>
    <property type="match status" value="1"/>
</dbReference>
<evidence type="ECO:0000255" key="1">
    <source>
        <dbReference type="HAMAP-Rule" id="MF_01367"/>
    </source>
</evidence>
<evidence type="ECO:0000305" key="2"/>
<reference key="1">
    <citation type="journal article" date="2011" name="MBio">
        <title>Novel metabolic attributes of the genus Cyanothece, comprising a group of unicellular nitrogen-fixing Cyanobacteria.</title>
        <authorList>
            <person name="Bandyopadhyay A."/>
            <person name="Elvitigala T."/>
            <person name="Welsh E."/>
            <person name="Stockel J."/>
            <person name="Liberton M."/>
            <person name="Min H."/>
            <person name="Sherman L.A."/>
            <person name="Pakrasi H.B."/>
        </authorList>
    </citation>
    <scope>NUCLEOTIDE SEQUENCE [LARGE SCALE GENOMIC DNA]</scope>
    <source>
        <strain>PCC 7425 / ATCC 29141</strain>
    </source>
</reference>